<dbReference type="EMBL" id="AE000520">
    <property type="protein sequence ID" value="AAC65652.1"/>
    <property type="molecule type" value="Genomic_DNA"/>
</dbReference>
<dbReference type="PIR" id="D71294">
    <property type="entry name" value="D71294"/>
</dbReference>
<dbReference type="RefSeq" id="WP_010882121.1">
    <property type="nucleotide sequence ID" value="NC_021490.2"/>
</dbReference>
<dbReference type="SMR" id="O83682"/>
<dbReference type="IntAct" id="O83682">
    <property type="interactions" value="10"/>
</dbReference>
<dbReference type="STRING" id="243276.TP_0676"/>
<dbReference type="EnsemblBacteria" id="AAC65652">
    <property type="protein sequence ID" value="AAC65652"/>
    <property type="gene ID" value="TP_0676"/>
</dbReference>
<dbReference type="KEGG" id="tpa:TP_0676"/>
<dbReference type="KEGG" id="tpw:TPANIC_0676"/>
<dbReference type="HOGENOM" id="CLU_2412293_0_0_12"/>
<dbReference type="Proteomes" id="UP000000811">
    <property type="component" value="Chromosome"/>
</dbReference>
<keyword id="KW-1185">Reference proteome</keyword>
<feature type="chain" id="PRO_0000202301" description="Uncharacterized protein TP_0676">
    <location>
        <begin position="1"/>
        <end position="92"/>
    </location>
</feature>
<feature type="region of interest" description="Disordered" evidence="1">
    <location>
        <begin position="25"/>
        <end position="53"/>
    </location>
</feature>
<name>Y676_TREPA</name>
<proteinExistence type="predicted"/>
<organism>
    <name type="scientific">Treponema pallidum (strain Nichols)</name>
    <dbReference type="NCBI Taxonomy" id="243276"/>
    <lineage>
        <taxon>Bacteria</taxon>
        <taxon>Pseudomonadati</taxon>
        <taxon>Spirochaetota</taxon>
        <taxon>Spirochaetia</taxon>
        <taxon>Spirochaetales</taxon>
        <taxon>Treponemataceae</taxon>
        <taxon>Treponema</taxon>
    </lineage>
</organism>
<protein>
    <recommendedName>
        <fullName>Uncharacterized protein TP_0676</fullName>
    </recommendedName>
</protein>
<evidence type="ECO:0000256" key="1">
    <source>
        <dbReference type="SAM" id="MobiDB-lite"/>
    </source>
</evidence>
<accession>O83682</accession>
<gene>
    <name type="ordered locus">TP_0676</name>
</gene>
<sequence length="92" mass="10266">MRCSHNWDDPPPLFGAVSYGMQEGAGRGVRREARDTPCRGTAEGLATSQPEDGETRAALQRIDHLDTQLLQLERDLAHYLEMAELPDPFSEN</sequence>
<reference key="1">
    <citation type="journal article" date="1998" name="Science">
        <title>Complete genome sequence of Treponema pallidum, the syphilis spirochete.</title>
        <authorList>
            <person name="Fraser C.M."/>
            <person name="Norris S.J."/>
            <person name="Weinstock G.M."/>
            <person name="White O."/>
            <person name="Sutton G.G."/>
            <person name="Dodson R.J."/>
            <person name="Gwinn M.L."/>
            <person name="Hickey E.K."/>
            <person name="Clayton R.A."/>
            <person name="Ketchum K.A."/>
            <person name="Sodergren E."/>
            <person name="Hardham J.M."/>
            <person name="McLeod M.P."/>
            <person name="Salzberg S.L."/>
            <person name="Peterson J.D."/>
            <person name="Khalak H.G."/>
            <person name="Richardson D.L."/>
            <person name="Howell J.K."/>
            <person name="Chidambaram M."/>
            <person name="Utterback T.R."/>
            <person name="McDonald L.A."/>
            <person name="Artiach P."/>
            <person name="Bowman C."/>
            <person name="Cotton M.D."/>
            <person name="Fujii C."/>
            <person name="Garland S.A."/>
            <person name="Hatch B."/>
            <person name="Horst K."/>
            <person name="Roberts K.M."/>
            <person name="Sandusky M."/>
            <person name="Weidman J.F."/>
            <person name="Smith H.O."/>
            <person name="Venter J.C."/>
        </authorList>
    </citation>
    <scope>NUCLEOTIDE SEQUENCE [LARGE SCALE GENOMIC DNA]</scope>
    <source>
        <strain>Nichols</strain>
    </source>
</reference>